<proteinExistence type="evidence at protein level"/>
<keyword id="KW-0002">3D-structure</keyword>
<keyword id="KW-0067">ATP-binding</keyword>
<keyword id="KW-0963">Cytoplasm</keyword>
<keyword id="KW-0418">Kinase</keyword>
<keyword id="KW-0545">Nucleotide biosynthesis</keyword>
<keyword id="KW-0547">Nucleotide-binding</keyword>
<keyword id="KW-1185">Reference proteome</keyword>
<keyword id="KW-0808">Transferase</keyword>
<organism>
    <name type="scientific">Francisella tularensis subsp. tularensis (strain SCHU S4 / Schu 4)</name>
    <dbReference type="NCBI Taxonomy" id="177416"/>
    <lineage>
        <taxon>Bacteria</taxon>
        <taxon>Pseudomonadati</taxon>
        <taxon>Pseudomonadota</taxon>
        <taxon>Gammaproteobacteria</taxon>
        <taxon>Thiotrichales</taxon>
        <taxon>Francisellaceae</taxon>
        <taxon>Francisella</taxon>
    </lineage>
</organism>
<dbReference type="EC" id="2.7.4.3" evidence="1"/>
<dbReference type="EMBL" id="AJ749949">
    <property type="protein sequence ID" value="CAG45794.1"/>
    <property type="molecule type" value="Genomic_DNA"/>
</dbReference>
<dbReference type="RefSeq" id="WP_003018613.1">
    <property type="nucleotide sequence ID" value="NZ_CP010290.1"/>
</dbReference>
<dbReference type="RefSeq" id="YP_170128.1">
    <property type="nucleotide sequence ID" value="NC_006570.2"/>
</dbReference>
<dbReference type="PDB" id="4PZL">
    <property type="method" value="X-ray"/>
    <property type="resolution" value="2.10 A"/>
    <property type="chains" value="A/B/C/D=1-218"/>
</dbReference>
<dbReference type="PDBsum" id="4PZL"/>
<dbReference type="SMR" id="Q5NFR4"/>
<dbReference type="STRING" id="177416.FTT_1161"/>
<dbReference type="DNASU" id="3192396"/>
<dbReference type="EnsemblBacteria" id="CAG45794">
    <property type="protein sequence ID" value="CAG45794"/>
    <property type="gene ID" value="FTT_1161"/>
</dbReference>
<dbReference type="KEGG" id="ftu:FTT_1161"/>
<dbReference type="eggNOG" id="COG0563">
    <property type="taxonomic scope" value="Bacteria"/>
</dbReference>
<dbReference type="OrthoDB" id="9805030at2"/>
<dbReference type="UniPathway" id="UPA00588">
    <property type="reaction ID" value="UER00649"/>
</dbReference>
<dbReference type="EvolutionaryTrace" id="Q5NFR4"/>
<dbReference type="Proteomes" id="UP000001174">
    <property type="component" value="Chromosome"/>
</dbReference>
<dbReference type="GO" id="GO:0005737">
    <property type="term" value="C:cytoplasm"/>
    <property type="evidence" value="ECO:0007669"/>
    <property type="project" value="UniProtKB-SubCell"/>
</dbReference>
<dbReference type="GO" id="GO:0004017">
    <property type="term" value="F:adenylate kinase activity"/>
    <property type="evidence" value="ECO:0007669"/>
    <property type="project" value="UniProtKB-UniRule"/>
</dbReference>
<dbReference type="GO" id="GO:0005524">
    <property type="term" value="F:ATP binding"/>
    <property type="evidence" value="ECO:0007669"/>
    <property type="project" value="UniProtKB-UniRule"/>
</dbReference>
<dbReference type="GO" id="GO:0044209">
    <property type="term" value="P:AMP salvage"/>
    <property type="evidence" value="ECO:0007669"/>
    <property type="project" value="UniProtKB-UniRule"/>
</dbReference>
<dbReference type="CDD" id="cd01428">
    <property type="entry name" value="ADK"/>
    <property type="match status" value="1"/>
</dbReference>
<dbReference type="FunFam" id="3.40.50.300:FF:000106">
    <property type="entry name" value="Adenylate kinase mitochondrial"/>
    <property type="match status" value="1"/>
</dbReference>
<dbReference type="Gene3D" id="3.40.50.300">
    <property type="entry name" value="P-loop containing nucleotide triphosphate hydrolases"/>
    <property type="match status" value="1"/>
</dbReference>
<dbReference type="HAMAP" id="MF_00235">
    <property type="entry name" value="Adenylate_kinase_Adk"/>
    <property type="match status" value="1"/>
</dbReference>
<dbReference type="InterPro" id="IPR006259">
    <property type="entry name" value="Adenyl_kin_sub"/>
</dbReference>
<dbReference type="InterPro" id="IPR000850">
    <property type="entry name" value="Adenylat/UMP-CMP_kin"/>
</dbReference>
<dbReference type="InterPro" id="IPR007862">
    <property type="entry name" value="Adenylate_kinase_lid-dom"/>
</dbReference>
<dbReference type="InterPro" id="IPR027417">
    <property type="entry name" value="P-loop_NTPase"/>
</dbReference>
<dbReference type="NCBIfam" id="TIGR01351">
    <property type="entry name" value="adk"/>
    <property type="match status" value="1"/>
</dbReference>
<dbReference type="NCBIfam" id="NF001379">
    <property type="entry name" value="PRK00279.1-1"/>
    <property type="match status" value="1"/>
</dbReference>
<dbReference type="NCBIfam" id="NF001380">
    <property type="entry name" value="PRK00279.1-2"/>
    <property type="match status" value="1"/>
</dbReference>
<dbReference type="NCBIfam" id="NF001381">
    <property type="entry name" value="PRK00279.1-3"/>
    <property type="match status" value="1"/>
</dbReference>
<dbReference type="PANTHER" id="PTHR23359">
    <property type="entry name" value="NUCLEOTIDE KINASE"/>
    <property type="match status" value="1"/>
</dbReference>
<dbReference type="Pfam" id="PF00406">
    <property type="entry name" value="ADK"/>
    <property type="match status" value="1"/>
</dbReference>
<dbReference type="Pfam" id="PF05191">
    <property type="entry name" value="ADK_lid"/>
    <property type="match status" value="1"/>
</dbReference>
<dbReference type="PRINTS" id="PR00094">
    <property type="entry name" value="ADENYLTKNASE"/>
</dbReference>
<dbReference type="SUPFAM" id="SSF52540">
    <property type="entry name" value="P-loop containing nucleoside triphosphate hydrolases"/>
    <property type="match status" value="1"/>
</dbReference>
<protein>
    <recommendedName>
        <fullName evidence="1">Adenylate kinase</fullName>
        <shortName evidence="1">AK</shortName>
        <ecNumber evidence="1">2.7.4.3</ecNumber>
    </recommendedName>
    <alternativeName>
        <fullName evidence="1">ATP-AMP transphosphorylase</fullName>
    </alternativeName>
    <alternativeName>
        <fullName evidence="1">ATP:AMP phosphotransferase</fullName>
    </alternativeName>
    <alternativeName>
        <fullName evidence="1">Adenylate monophosphate kinase</fullName>
    </alternativeName>
</protein>
<accession>Q5NFR4</accession>
<gene>
    <name evidence="1" type="primary">adk</name>
    <name type="ordered locus">FTT_1161</name>
</gene>
<reference key="1">
    <citation type="journal article" date="2005" name="Nat. Genet.">
        <title>The complete genome sequence of Francisella tularensis, the causative agent of tularemia.</title>
        <authorList>
            <person name="Larsson P."/>
            <person name="Oyston P.C.F."/>
            <person name="Chain P."/>
            <person name="Chu M.C."/>
            <person name="Duffield M."/>
            <person name="Fuxelius H.-H."/>
            <person name="Garcia E."/>
            <person name="Haelltorp G."/>
            <person name="Johansson D."/>
            <person name="Isherwood K.E."/>
            <person name="Karp P.D."/>
            <person name="Larsson E."/>
            <person name="Liu Y."/>
            <person name="Michell S."/>
            <person name="Prior J."/>
            <person name="Prior R."/>
            <person name="Malfatti S."/>
            <person name="Sjoestedt A."/>
            <person name="Svensson K."/>
            <person name="Thompson N."/>
            <person name="Vergez L."/>
            <person name="Wagg J.K."/>
            <person name="Wren B.W."/>
            <person name="Lindler L.E."/>
            <person name="Andersson S.G.E."/>
            <person name="Forsman M."/>
            <person name="Titball R.W."/>
        </authorList>
    </citation>
    <scope>NUCLEOTIDE SEQUENCE [LARGE SCALE GENOMIC DNA]</scope>
    <source>
        <strain>SCHU S4 / Schu 4</strain>
    </source>
</reference>
<sequence>MRIILLGAPGAGKGTQAKIIEQKYNIAHISTGDMIRETIKSGSALGQELKKVLDAGELVSDEFIIKIVKDRISKNDCNNGFLLDGVPRTIPQAQELDKLGVNIDYIVEVDVADNLLIERITGRRIHPASGRTYHTKFNPPKVADKDDVTGEPLITRTDDNEDTVKQRLSVYHAQTAKLIDFYRNFSSTNTKIPKYIKINGDQAVEKVSQDIFDQLNKR</sequence>
<comment type="function">
    <text evidence="1">Catalyzes the reversible transfer of the terminal phosphate group between ATP and AMP. Plays an important role in cellular energy homeostasis and in adenine nucleotide metabolism.</text>
</comment>
<comment type="catalytic activity">
    <reaction evidence="1">
        <text>AMP + ATP = 2 ADP</text>
        <dbReference type="Rhea" id="RHEA:12973"/>
        <dbReference type="ChEBI" id="CHEBI:30616"/>
        <dbReference type="ChEBI" id="CHEBI:456215"/>
        <dbReference type="ChEBI" id="CHEBI:456216"/>
        <dbReference type="EC" id="2.7.4.3"/>
    </reaction>
</comment>
<comment type="pathway">
    <text evidence="1">Purine metabolism; AMP biosynthesis via salvage pathway; AMP from ADP: step 1/1.</text>
</comment>
<comment type="subunit">
    <text evidence="1">Monomer.</text>
</comment>
<comment type="subcellular location">
    <subcellularLocation>
        <location evidence="1">Cytoplasm</location>
    </subcellularLocation>
</comment>
<comment type="domain">
    <text evidence="1">Consists of three domains, a large central CORE domain and two small peripheral domains, NMPbind and LID, which undergo movements during catalysis. The LID domain closes over the site of phosphoryl transfer upon ATP binding. Assembling and dissambling the active center during each catalytic cycle provides an effective means to prevent ATP hydrolysis.</text>
</comment>
<comment type="similarity">
    <text evidence="1">Belongs to the adenylate kinase family.</text>
</comment>
<evidence type="ECO:0000255" key="1">
    <source>
        <dbReference type="HAMAP-Rule" id="MF_00235"/>
    </source>
</evidence>
<evidence type="ECO:0007829" key="2">
    <source>
        <dbReference type="PDB" id="4PZL"/>
    </source>
</evidence>
<name>KAD_FRATT</name>
<feature type="chain" id="PRO_1000058832" description="Adenylate kinase">
    <location>
        <begin position="1"/>
        <end position="218"/>
    </location>
</feature>
<feature type="region of interest" description="NMP" evidence="1">
    <location>
        <begin position="30"/>
        <end position="59"/>
    </location>
</feature>
<feature type="region of interest" description="LID" evidence="1">
    <location>
        <begin position="122"/>
        <end position="159"/>
    </location>
</feature>
<feature type="binding site" evidence="1">
    <location>
        <begin position="10"/>
        <end position="15"/>
    </location>
    <ligand>
        <name>ATP</name>
        <dbReference type="ChEBI" id="CHEBI:30616"/>
    </ligand>
</feature>
<feature type="binding site" evidence="1">
    <location>
        <position position="31"/>
    </location>
    <ligand>
        <name>AMP</name>
        <dbReference type="ChEBI" id="CHEBI:456215"/>
    </ligand>
</feature>
<feature type="binding site" evidence="1">
    <location>
        <position position="36"/>
    </location>
    <ligand>
        <name>AMP</name>
        <dbReference type="ChEBI" id="CHEBI:456215"/>
    </ligand>
</feature>
<feature type="binding site" evidence="1">
    <location>
        <begin position="57"/>
        <end position="59"/>
    </location>
    <ligand>
        <name>AMP</name>
        <dbReference type="ChEBI" id="CHEBI:456215"/>
    </ligand>
</feature>
<feature type="binding site" evidence="1">
    <location>
        <position position="92"/>
    </location>
    <ligand>
        <name>AMP</name>
        <dbReference type="ChEBI" id="CHEBI:456215"/>
    </ligand>
</feature>
<feature type="binding site" evidence="1">
    <location>
        <position position="123"/>
    </location>
    <ligand>
        <name>ATP</name>
        <dbReference type="ChEBI" id="CHEBI:30616"/>
    </ligand>
</feature>
<feature type="binding site" evidence="1">
    <location>
        <begin position="132"/>
        <end position="133"/>
    </location>
    <ligand>
        <name>ATP</name>
        <dbReference type="ChEBI" id="CHEBI:30616"/>
    </ligand>
</feature>
<feature type="binding site" evidence="1">
    <location>
        <position position="156"/>
    </location>
    <ligand>
        <name>AMP</name>
        <dbReference type="ChEBI" id="CHEBI:456215"/>
    </ligand>
</feature>
<feature type="binding site" evidence="1">
    <location>
        <position position="167"/>
    </location>
    <ligand>
        <name>AMP</name>
        <dbReference type="ChEBI" id="CHEBI:456215"/>
    </ligand>
</feature>
<feature type="binding site" evidence="1">
    <location>
        <position position="202"/>
    </location>
    <ligand>
        <name>ATP</name>
        <dbReference type="ChEBI" id="CHEBI:30616"/>
    </ligand>
</feature>
<feature type="strand" evidence="2">
    <location>
        <begin position="1"/>
        <end position="7"/>
    </location>
</feature>
<feature type="helix" evidence="2">
    <location>
        <begin position="13"/>
        <end position="24"/>
    </location>
</feature>
<feature type="strand" evidence="2">
    <location>
        <begin position="27"/>
        <end position="30"/>
    </location>
</feature>
<feature type="helix" evidence="2">
    <location>
        <begin position="31"/>
        <end position="41"/>
    </location>
</feature>
<feature type="helix" evidence="2">
    <location>
        <begin position="44"/>
        <end position="54"/>
    </location>
</feature>
<feature type="helix" evidence="2">
    <location>
        <begin position="61"/>
        <end position="71"/>
    </location>
</feature>
<feature type="helix" evidence="2">
    <location>
        <begin position="75"/>
        <end position="77"/>
    </location>
</feature>
<feature type="strand" evidence="2">
    <location>
        <begin position="80"/>
        <end position="85"/>
    </location>
</feature>
<feature type="helix" evidence="2">
    <location>
        <begin position="90"/>
        <end position="98"/>
    </location>
</feature>
<feature type="strand" evidence="2">
    <location>
        <begin position="105"/>
        <end position="110"/>
    </location>
</feature>
<feature type="helix" evidence="2">
    <location>
        <begin position="113"/>
        <end position="121"/>
    </location>
</feature>
<feature type="strand" evidence="2">
    <location>
        <begin position="123"/>
        <end position="125"/>
    </location>
</feature>
<feature type="turn" evidence="2">
    <location>
        <begin position="127"/>
        <end position="129"/>
    </location>
</feature>
<feature type="strand" evidence="2">
    <location>
        <begin position="132"/>
        <end position="134"/>
    </location>
</feature>
<feature type="turn" evidence="2">
    <location>
        <begin position="135"/>
        <end position="137"/>
    </location>
</feature>
<feature type="turn" evidence="2">
    <location>
        <begin position="147"/>
        <end position="149"/>
    </location>
</feature>
<feature type="helix" evidence="2">
    <location>
        <begin position="157"/>
        <end position="159"/>
    </location>
</feature>
<feature type="helix" evidence="2">
    <location>
        <begin position="161"/>
        <end position="183"/>
    </location>
</feature>
<feature type="strand" evidence="2">
    <location>
        <begin position="188"/>
        <end position="190"/>
    </location>
</feature>
<feature type="strand" evidence="2">
    <location>
        <begin position="194"/>
        <end position="199"/>
    </location>
</feature>
<feature type="helix" evidence="2">
    <location>
        <begin position="204"/>
        <end position="216"/>
    </location>
</feature>